<feature type="signal peptide" evidence="2">
    <location>
        <begin position="1"/>
        <end position="30"/>
    </location>
</feature>
<feature type="chain" id="PRO_0000004301" description="Serine carboxypeptidase 1 chain A">
    <location>
        <begin position="31"/>
        <end position="296"/>
    </location>
</feature>
<feature type="propeptide" id="PRO_0000004302" description="Linker peptide" evidence="5">
    <location>
        <begin position="297"/>
        <end position="351"/>
    </location>
</feature>
<feature type="chain" id="PRO_0000004303" description="Serine carboxypeptidase 1 chain B">
    <location>
        <begin position="352"/>
        <end position="499"/>
    </location>
</feature>
<feature type="short sequence motif" description="Microbody targeting signal" evidence="2">
    <location>
        <begin position="497"/>
        <end position="499"/>
    </location>
</feature>
<feature type="active site" evidence="1">
    <location>
        <position position="188"/>
    </location>
</feature>
<feature type="active site" evidence="1">
    <location>
        <position position="423"/>
    </location>
</feature>
<feature type="active site" evidence="1">
    <location>
        <position position="476"/>
    </location>
</feature>
<feature type="glycosylation site" description="N-linked (GlcNAc...) asparagine">
    <location>
        <position position="148"/>
    </location>
</feature>
<feature type="glycosylation site" description="N-linked (GlcNAc...) asparagine">
    <location>
        <position position="262"/>
    </location>
</feature>
<feature type="glycosylation site" description="N-linked (GlcNAc...) asparagine">
    <location>
        <position position="407"/>
    </location>
</feature>
<feature type="disulfide bond" description="Interchain (between A and B chains)" evidence="1">
    <location>
        <begin position="92"/>
        <end position="388"/>
    </location>
</feature>
<feature type="disulfide bond" evidence="1">
    <location>
        <begin position="256"/>
        <end position="268"/>
    </location>
</feature>
<feature type="disulfide bond" description="Interchain (between A and B chains)" evidence="1">
    <location>
        <begin position="291"/>
        <end position="355"/>
    </location>
</feature>
<feature type="sequence conflict" description="In Ref. 3; AA sequence." evidence="6" ref="3">
    <original>H</original>
    <variation>P</variation>
    <location>
        <position position="102"/>
    </location>
</feature>
<proteinExistence type="evidence at protein level"/>
<dbReference type="EC" id="3.4.16.5"/>
<dbReference type="EMBL" id="Y09603">
    <property type="protein sequence ID" value="CAA70816.1"/>
    <property type="molecule type" value="mRNA"/>
</dbReference>
<dbReference type="EMBL" id="J03897">
    <property type="protein sequence ID" value="AAA32940.1"/>
    <property type="molecule type" value="mRNA"/>
</dbReference>
<dbReference type="PIR" id="T05367">
    <property type="entry name" value="CPBHS"/>
</dbReference>
<dbReference type="SMR" id="P07519"/>
<dbReference type="ESTHER" id="horvu-cbp1">
    <property type="family name" value="Carboxypeptidase_S10"/>
</dbReference>
<dbReference type="MEROPS" id="S10.004"/>
<dbReference type="GlyCosmos" id="P07519">
    <property type="glycosylation" value="3 sites, No reported glycans"/>
</dbReference>
<dbReference type="ExpressionAtlas" id="P07519">
    <property type="expression patterns" value="baseline and differential"/>
</dbReference>
<dbReference type="GO" id="GO:0005576">
    <property type="term" value="C:extracellular region"/>
    <property type="evidence" value="ECO:0007669"/>
    <property type="project" value="UniProtKB-SubCell"/>
</dbReference>
<dbReference type="GO" id="GO:0016747">
    <property type="term" value="F:acyltransferase activity, transferring groups other than amino-acyl groups"/>
    <property type="evidence" value="ECO:0007669"/>
    <property type="project" value="TreeGrafter"/>
</dbReference>
<dbReference type="GO" id="GO:0004185">
    <property type="term" value="F:serine-type carboxypeptidase activity"/>
    <property type="evidence" value="ECO:0007669"/>
    <property type="project" value="UniProtKB-EC"/>
</dbReference>
<dbReference type="GO" id="GO:0006508">
    <property type="term" value="P:proteolysis"/>
    <property type="evidence" value="ECO:0007669"/>
    <property type="project" value="UniProtKB-KW"/>
</dbReference>
<dbReference type="GO" id="GO:0019748">
    <property type="term" value="P:secondary metabolic process"/>
    <property type="evidence" value="ECO:0007669"/>
    <property type="project" value="TreeGrafter"/>
</dbReference>
<dbReference type="FunFam" id="3.40.50.11320:FF:000002">
    <property type="entry name" value="Carboxypeptidase"/>
    <property type="match status" value="1"/>
</dbReference>
<dbReference type="FunFam" id="3.40.50.12670:FF:000001">
    <property type="entry name" value="Carboxypeptidase"/>
    <property type="match status" value="1"/>
</dbReference>
<dbReference type="FunFam" id="3.40.50.1820:FF:000143">
    <property type="entry name" value="Carboxypeptidase"/>
    <property type="match status" value="1"/>
</dbReference>
<dbReference type="Gene3D" id="3.40.50.12670">
    <property type="match status" value="1"/>
</dbReference>
<dbReference type="Gene3D" id="3.40.50.1820">
    <property type="entry name" value="alpha/beta hydrolase"/>
    <property type="match status" value="1"/>
</dbReference>
<dbReference type="InterPro" id="IPR029058">
    <property type="entry name" value="AB_hydrolase_fold"/>
</dbReference>
<dbReference type="InterPro" id="IPR001563">
    <property type="entry name" value="Peptidase_S10"/>
</dbReference>
<dbReference type="InterPro" id="IPR033124">
    <property type="entry name" value="Ser_caboxypep_his_AS"/>
</dbReference>
<dbReference type="InterPro" id="IPR018202">
    <property type="entry name" value="Ser_caboxypep_ser_AS"/>
</dbReference>
<dbReference type="PANTHER" id="PTHR11802:SF254">
    <property type="entry name" value="SERINE CARBOXYPEPTIDASE-LIKE 20"/>
    <property type="match status" value="1"/>
</dbReference>
<dbReference type="PANTHER" id="PTHR11802">
    <property type="entry name" value="SERINE PROTEASE FAMILY S10 SERINE CARBOXYPEPTIDASE"/>
    <property type="match status" value="1"/>
</dbReference>
<dbReference type="Pfam" id="PF00450">
    <property type="entry name" value="Peptidase_S10"/>
    <property type="match status" value="1"/>
</dbReference>
<dbReference type="PRINTS" id="PR00724">
    <property type="entry name" value="CRBOXYPTASEC"/>
</dbReference>
<dbReference type="SUPFAM" id="SSF53474">
    <property type="entry name" value="alpha/beta-Hydrolases"/>
    <property type="match status" value="1"/>
</dbReference>
<dbReference type="PROSITE" id="PS00560">
    <property type="entry name" value="CARBOXYPEPT_SER_HIS"/>
    <property type="match status" value="1"/>
</dbReference>
<dbReference type="PROSITE" id="PS00131">
    <property type="entry name" value="CARBOXYPEPT_SER_SER"/>
    <property type="match status" value="1"/>
</dbReference>
<comment type="function">
    <text>May be involved in the degradation of small peptides (2-5 residues) or in the degradation of storage proteins in the embryo.</text>
</comment>
<comment type="catalytic activity">
    <reaction evidence="3 4">
        <text>Release of a C-terminal amino acid with broad specificity.</text>
        <dbReference type="EC" id="3.4.16.5"/>
    </reaction>
</comment>
<comment type="subunit">
    <text>Carboxypeptidase I is a dimer, where each monomer is composed of two chains linked by disulfide bonds.</text>
</comment>
<comment type="subcellular location">
    <subcellularLocation>
        <location>Secreted</location>
    </subcellularLocation>
    <text>Secreted into the endosperm.</text>
</comment>
<comment type="developmental stage">
    <text>After one day of germination, mainly found in the scutellum of the developing grain; barely detectable after four days, and absent from the mature grain. A lower level of expression is seen in the aleurone both during development and germination.</text>
</comment>
<comment type="PTM">
    <text>The linker peptide is endoproteolytically excised during enzyme maturation.</text>
</comment>
<comment type="similarity">
    <text evidence="6">Belongs to the peptidase S10 family.</text>
</comment>
<reference key="1">
    <citation type="submission" date="1996-12" db="EMBL/GenBank/DDBJ databases">
        <authorList>
            <person name="Rocher A."/>
            <person name="Lok F."/>
            <person name="Cameron-Mills V."/>
            <person name="von Wettstein D."/>
        </authorList>
    </citation>
    <scope>NUCLEOTIDE SEQUENCE [MRNA]</scope>
    <source>
        <tissue>Aleurone</tissue>
    </source>
</reference>
<reference key="2">
    <citation type="journal article" date="1988" name="J. Biol. Chem.">
        <title>The A- and B-chains of carboxypeptidase I from germinated barley originate from a single precursor polypeptide.</title>
        <authorList>
            <person name="Doan N.P."/>
            <person name="Fincher G.B."/>
        </authorList>
    </citation>
    <scope>NUCLEOTIDE SEQUENCE [MRNA] OF 88-499</scope>
</reference>
<reference key="3">
    <citation type="journal article" date="1986" name="Carlsberg Res. Commun.">
        <title>Primary structure of carboxypeptidase I from malted barley.</title>
        <authorList>
            <person name="Soerensen S.B."/>
            <person name="Breddam K."/>
            <person name="Svendsen I."/>
        </authorList>
    </citation>
    <scope>PROTEIN SEQUENCE OF 31-296 AND 352-499</scope>
</reference>
<name>CBP1_HORVU</name>
<protein>
    <recommendedName>
        <fullName>Serine carboxypeptidase 1</fullName>
        <ecNumber>3.4.16.5</ecNumber>
    </recommendedName>
    <alternativeName>
        <fullName>CP-MI</fullName>
    </alternativeName>
    <alternativeName>
        <fullName>Carboxypeptidase C</fullName>
    </alternativeName>
    <alternativeName>
        <fullName>Serine carboxypeptidase I</fullName>
    </alternativeName>
    <component>
        <recommendedName>
            <fullName>Serine carboxypeptidase 1 chain A</fullName>
        </recommendedName>
        <alternativeName>
            <fullName>Serine carboxypeptidase I chain A</fullName>
        </alternativeName>
    </component>
    <component>
        <recommendedName>
            <fullName>Serine carboxypeptidase 1 chain B</fullName>
        </recommendedName>
        <alternativeName>
            <fullName>Serine carboxypeptidase I chain B</fullName>
        </alternativeName>
    </component>
</protein>
<organism>
    <name type="scientific">Hordeum vulgare</name>
    <name type="common">Barley</name>
    <dbReference type="NCBI Taxonomy" id="4513"/>
    <lineage>
        <taxon>Eukaryota</taxon>
        <taxon>Viridiplantae</taxon>
        <taxon>Streptophyta</taxon>
        <taxon>Embryophyta</taxon>
        <taxon>Tracheophyta</taxon>
        <taxon>Spermatophyta</taxon>
        <taxon>Magnoliopsida</taxon>
        <taxon>Liliopsida</taxon>
        <taxon>Poales</taxon>
        <taxon>Poaceae</taxon>
        <taxon>BOP clade</taxon>
        <taxon>Pooideae</taxon>
        <taxon>Triticodae</taxon>
        <taxon>Triticeae</taxon>
        <taxon>Hordeinae</taxon>
        <taxon>Hordeum</taxon>
    </lineage>
</organism>
<keyword id="KW-0121">Carboxypeptidase</keyword>
<keyword id="KW-0903">Direct protein sequencing</keyword>
<keyword id="KW-1015">Disulfide bond</keyword>
<keyword id="KW-0325">Glycoprotein</keyword>
<keyword id="KW-0378">Hydrolase</keyword>
<keyword id="KW-0645">Protease</keyword>
<keyword id="KW-0964">Secreted</keyword>
<keyword id="KW-0732">Signal</keyword>
<keyword id="KW-0865">Zymogen</keyword>
<sequence length="499" mass="54096">MARCRRRSGCTAGAALLLLLALALSGGGGAAPQGAEVTGLPGFDGALPSKHYAGYVTVDEGHGRNLFYYVVESERDPGKDPVVLWLNGGPGCSSFDGFVYEHGPFNFESGGSVKSLPKLHLNPYAWSKVSTMIYLDSPAGVGLSYSKNVSDYETGDLKTATDSHTFLLKWFQLYPEFLSNPFYIAGESYAGVYVPTLSHEVVKGIQGGAKPTINFKGYMVGNGVCDTIFDGNALVPFAHGMGLISDEIYQQASTSCHGNYWNATDGKCDTAISKIESLISGLNIYDILEPCYHSRSIKEVNLQNSKLPQSFKDLGTTNKPFPVRTRMLGRAWPLRAPVKAGRVPSWQEVASGVPCMSDEVATAWLDNAAVRSAIHAQSVSAIGPWLLCTDKLYFVHDAGSMIAYHKNLTSQGYRAIIFSGDHDMCVPFTGSEAWTKSLGYGVVDSWRPWITNGQVSGYTEGYEHGLTFATIKGAGHTVPEYKPQEAFAFYSRWLAGSKL</sequence>
<accession>P07519</accession>
<accession>P07520</accession>
<evidence type="ECO:0000250" key="1"/>
<evidence type="ECO:0000255" key="2"/>
<evidence type="ECO:0000255" key="3">
    <source>
        <dbReference type="PROSITE-ProRule" id="PRU10074"/>
    </source>
</evidence>
<evidence type="ECO:0000255" key="4">
    <source>
        <dbReference type="PROSITE-ProRule" id="PRU10075"/>
    </source>
</evidence>
<evidence type="ECO:0000269" key="5">
    <source ref="3"/>
</evidence>
<evidence type="ECO:0000305" key="6"/>
<gene>
    <name type="primary">CBP1</name>
    <name type="synonym">CXP;1</name>
</gene>